<reference key="1">
    <citation type="journal article" date="2009" name="Genome Biol.">
        <title>Genomic and genetic analyses of diversity and plant interactions of Pseudomonas fluorescens.</title>
        <authorList>
            <person name="Silby M.W."/>
            <person name="Cerdeno-Tarraga A.M."/>
            <person name="Vernikos G.S."/>
            <person name="Giddens S.R."/>
            <person name="Jackson R.W."/>
            <person name="Preston G.M."/>
            <person name="Zhang X.-X."/>
            <person name="Moon C.D."/>
            <person name="Gehrig S.M."/>
            <person name="Godfrey S.A.C."/>
            <person name="Knight C.G."/>
            <person name="Malone J.G."/>
            <person name="Robinson Z."/>
            <person name="Spiers A.J."/>
            <person name="Harris S."/>
            <person name="Challis G.L."/>
            <person name="Yaxley A.M."/>
            <person name="Harris D."/>
            <person name="Seeger K."/>
            <person name="Murphy L."/>
            <person name="Rutter S."/>
            <person name="Squares R."/>
            <person name="Quail M.A."/>
            <person name="Saunders E."/>
            <person name="Mavromatis K."/>
            <person name="Brettin T.S."/>
            <person name="Bentley S.D."/>
            <person name="Hothersall J."/>
            <person name="Stephens E."/>
            <person name="Thomas C.M."/>
            <person name="Parkhill J."/>
            <person name="Levy S.B."/>
            <person name="Rainey P.B."/>
            <person name="Thomson N.R."/>
        </authorList>
    </citation>
    <scope>NUCLEOTIDE SEQUENCE [LARGE SCALE GENOMIC DNA]</scope>
    <source>
        <strain>Pf0-1</strain>
    </source>
</reference>
<feature type="chain" id="PRO_1000003573" description="Small ribosomal subunit protein bS18">
    <location>
        <begin position="1"/>
        <end position="76"/>
    </location>
</feature>
<accession>Q3KIX7</accession>
<protein>
    <recommendedName>
        <fullName evidence="1">Small ribosomal subunit protein bS18</fullName>
    </recommendedName>
    <alternativeName>
        <fullName evidence="2">30S ribosomal protein S18</fullName>
    </alternativeName>
</protein>
<comment type="function">
    <text evidence="1">Binds as a heterodimer with protein bS6 to the central domain of the 16S rRNA, where it helps stabilize the platform of the 30S subunit.</text>
</comment>
<comment type="subunit">
    <text evidence="1">Part of the 30S ribosomal subunit. Forms a tight heterodimer with protein bS6.</text>
</comment>
<comment type="similarity">
    <text evidence="1">Belongs to the bacterial ribosomal protein bS18 family.</text>
</comment>
<sequence length="76" mass="8917">MARFFRRRKFCRFTAEDVKEIDYKDLNTLKAYVSETGKIVPSRITGTKARYQRQLATAIKRARFLALLAYTDSHGR</sequence>
<evidence type="ECO:0000255" key="1">
    <source>
        <dbReference type="HAMAP-Rule" id="MF_00270"/>
    </source>
</evidence>
<evidence type="ECO:0000305" key="2"/>
<gene>
    <name evidence="1" type="primary">rpsR</name>
    <name type="ordered locus">Pfl01_0535</name>
</gene>
<proteinExistence type="inferred from homology"/>
<name>RS18_PSEPF</name>
<keyword id="KW-0687">Ribonucleoprotein</keyword>
<keyword id="KW-0689">Ribosomal protein</keyword>
<keyword id="KW-0694">RNA-binding</keyword>
<keyword id="KW-0699">rRNA-binding</keyword>
<organism>
    <name type="scientific">Pseudomonas fluorescens (strain Pf0-1)</name>
    <dbReference type="NCBI Taxonomy" id="205922"/>
    <lineage>
        <taxon>Bacteria</taxon>
        <taxon>Pseudomonadati</taxon>
        <taxon>Pseudomonadota</taxon>
        <taxon>Gammaproteobacteria</taxon>
        <taxon>Pseudomonadales</taxon>
        <taxon>Pseudomonadaceae</taxon>
        <taxon>Pseudomonas</taxon>
    </lineage>
</organism>
<dbReference type="EMBL" id="CP000094">
    <property type="protein sequence ID" value="ABA72279.1"/>
    <property type="molecule type" value="Genomic_DNA"/>
</dbReference>
<dbReference type="RefSeq" id="WP_002551829.1">
    <property type="nucleotide sequence ID" value="NC_007492.2"/>
</dbReference>
<dbReference type="SMR" id="Q3KIX7"/>
<dbReference type="GeneID" id="98109115"/>
<dbReference type="KEGG" id="pfo:Pfl01_0535"/>
<dbReference type="eggNOG" id="COG0238">
    <property type="taxonomic scope" value="Bacteria"/>
</dbReference>
<dbReference type="HOGENOM" id="CLU_148710_2_3_6"/>
<dbReference type="Proteomes" id="UP000002704">
    <property type="component" value="Chromosome"/>
</dbReference>
<dbReference type="GO" id="GO:0022627">
    <property type="term" value="C:cytosolic small ribosomal subunit"/>
    <property type="evidence" value="ECO:0007669"/>
    <property type="project" value="TreeGrafter"/>
</dbReference>
<dbReference type="GO" id="GO:0070181">
    <property type="term" value="F:small ribosomal subunit rRNA binding"/>
    <property type="evidence" value="ECO:0007669"/>
    <property type="project" value="TreeGrafter"/>
</dbReference>
<dbReference type="GO" id="GO:0003735">
    <property type="term" value="F:structural constituent of ribosome"/>
    <property type="evidence" value="ECO:0007669"/>
    <property type="project" value="InterPro"/>
</dbReference>
<dbReference type="GO" id="GO:0006412">
    <property type="term" value="P:translation"/>
    <property type="evidence" value="ECO:0007669"/>
    <property type="project" value="UniProtKB-UniRule"/>
</dbReference>
<dbReference type="FunFam" id="4.10.640.10:FF:000001">
    <property type="entry name" value="30S ribosomal protein S18"/>
    <property type="match status" value="1"/>
</dbReference>
<dbReference type="Gene3D" id="4.10.640.10">
    <property type="entry name" value="Ribosomal protein S18"/>
    <property type="match status" value="1"/>
</dbReference>
<dbReference type="HAMAP" id="MF_00270">
    <property type="entry name" value="Ribosomal_bS18"/>
    <property type="match status" value="1"/>
</dbReference>
<dbReference type="InterPro" id="IPR001648">
    <property type="entry name" value="Ribosomal_bS18"/>
</dbReference>
<dbReference type="InterPro" id="IPR018275">
    <property type="entry name" value="Ribosomal_bS18_CS"/>
</dbReference>
<dbReference type="InterPro" id="IPR036870">
    <property type="entry name" value="Ribosomal_bS18_sf"/>
</dbReference>
<dbReference type="NCBIfam" id="TIGR00165">
    <property type="entry name" value="S18"/>
    <property type="match status" value="1"/>
</dbReference>
<dbReference type="PANTHER" id="PTHR13479">
    <property type="entry name" value="30S RIBOSOMAL PROTEIN S18"/>
    <property type="match status" value="1"/>
</dbReference>
<dbReference type="PANTHER" id="PTHR13479:SF40">
    <property type="entry name" value="SMALL RIBOSOMAL SUBUNIT PROTEIN BS18M"/>
    <property type="match status" value="1"/>
</dbReference>
<dbReference type="Pfam" id="PF01084">
    <property type="entry name" value="Ribosomal_S18"/>
    <property type="match status" value="1"/>
</dbReference>
<dbReference type="PRINTS" id="PR00974">
    <property type="entry name" value="RIBOSOMALS18"/>
</dbReference>
<dbReference type="SUPFAM" id="SSF46911">
    <property type="entry name" value="Ribosomal protein S18"/>
    <property type="match status" value="1"/>
</dbReference>
<dbReference type="PROSITE" id="PS00057">
    <property type="entry name" value="RIBOSOMAL_S18"/>
    <property type="match status" value="1"/>
</dbReference>